<sequence length="144" mass="16625">MKVLVVNGPNLNMLGKRDKNIYGNFSHEDLVKMIEDWGRKNDVEVEVFQSNHEGEILDRLHRLDFDGLVINPGAFTHYSYAIRDALEIVKVPKVEVHISNIHRREEFRRRSVTAEVCDGQISGLGVYGYLLALEYIKKKLEELT</sequence>
<accession>A5IK69</accession>
<name>AROQ_THEP1</name>
<protein>
    <recommendedName>
        <fullName evidence="1">3-dehydroquinate dehydratase</fullName>
        <shortName evidence="1">3-dehydroquinase</shortName>
        <ecNumber evidence="1">4.2.1.10</ecNumber>
    </recommendedName>
    <alternativeName>
        <fullName evidence="1">Type II DHQase</fullName>
    </alternativeName>
</protein>
<evidence type="ECO:0000255" key="1">
    <source>
        <dbReference type="HAMAP-Rule" id="MF_00169"/>
    </source>
</evidence>
<reference key="1">
    <citation type="submission" date="2007-05" db="EMBL/GenBank/DDBJ databases">
        <title>Complete sequence of Thermotoga petrophila RKU-1.</title>
        <authorList>
            <consortium name="US DOE Joint Genome Institute"/>
            <person name="Copeland A."/>
            <person name="Lucas S."/>
            <person name="Lapidus A."/>
            <person name="Barry K."/>
            <person name="Glavina del Rio T."/>
            <person name="Dalin E."/>
            <person name="Tice H."/>
            <person name="Pitluck S."/>
            <person name="Sims D."/>
            <person name="Brettin T."/>
            <person name="Bruce D."/>
            <person name="Detter J.C."/>
            <person name="Han C."/>
            <person name="Tapia R."/>
            <person name="Schmutz J."/>
            <person name="Larimer F."/>
            <person name="Land M."/>
            <person name="Hauser L."/>
            <person name="Kyrpides N."/>
            <person name="Mikhailova N."/>
            <person name="Nelson K."/>
            <person name="Gogarten J.P."/>
            <person name="Noll K."/>
            <person name="Richardson P."/>
        </authorList>
    </citation>
    <scope>NUCLEOTIDE SEQUENCE [LARGE SCALE GENOMIC DNA]</scope>
    <source>
        <strain>ATCC BAA-488 / DSM 13995 / JCM 10881 / RKU-1</strain>
    </source>
</reference>
<keyword id="KW-0028">Amino-acid biosynthesis</keyword>
<keyword id="KW-0057">Aromatic amino acid biosynthesis</keyword>
<keyword id="KW-0456">Lyase</keyword>
<comment type="function">
    <text evidence="1">Catalyzes a trans-dehydration via an enolate intermediate.</text>
</comment>
<comment type="catalytic activity">
    <reaction evidence="1">
        <text>3-dehydroquinate = 3-dehydroshikimate + H2O</text>
        <dbReference type="Rhea" id="RHEA:21096"/>
        <dbReference type="ChEBI" id="CHEBI:15377"/>
        <dbReference type="ChEBI" id="CHEBI:16630"/>
        <dbReference type="ChEBI" id="CHEBI:32364"/>
        <dbReference type="EC" id="4.2.1.10"/>
    </reaction>
</comment>
<comment type="pathway">
    <text evidence="1">Metabolic intermediate biosynthesis; chorismate biosynthesis; chorismate from D-erythrose 4-phosphate and phosphoenolpyruvate: step 3/7.</text>
</comment>
<comment type="subunit">
    <text evidence="1">Homododecamer.</text>
</comment>
<comment type="similarity">
    <text evidence="1">Belongs to the type-II 3-dehydroquinase family.</text>
</comment>
<feature type="chain" id="PRO_1000023527" description="3-dehydroquinate dehydratase">
    <location>
        <begin position="1"/>
        <end position="144"/>
    </location>
</feature>
<feature type="active site" description="Proton acceptor" evidence="1">
    <location>
        <position position="22"/>
    </location>
</feature>
<feature type="active site" description="Proton donor" evidence="1">
    <location>
        <position position="97"/>
    </location>
</feature>
<feature type="binding site" evidence="1">
    <location>
        <position position="71"/>
    </location>
    <ligand>
        <name>substrate</name>
    </ligand>
</feature>
<feature type="binding site" evidence="1">
    <location>
        <position position="77"/>
    </location>
    <ligand>
        <name>substrate</name>
    </ligand>
</feature>
<feature type="binding site" evidence="1">
    <location>
        <position position="84"/>
    </location>
    <ligand>
        <name>substrate</name>
    </ligand>
</feature>
<feature type="binding site" evidence="1">
    <location>
        <begin position="98"/>
        <end position="99"/>
    </location>
    <ligand>
        <name>substrate</name>
    </ligand>
</feature>
<feature type="binding site" evidence="1">
    <location>
        <position position="108"/>
    </location>
    <ligand>
        <name>substrate</name>
    </ligand>
</feature>
<feature type="site" description="Transition state stabilizer" evidence="1">
    <location>
        <position position="17"/>
    </location>
</feature>
<proteinExistence type="inferred from homology"/>
<gene>
    <name evidence="1" type="primary">aroQ</name>
    <name type="ordered locus">Tpet_0571</name>
</gene>
<dbReference type="EC" id="4.2.1.10" evidence="1"/>
<dbReference type="EMBL" id="CP000702">
    <property type="protein sequence ID" value="ABQ46592.1"/>
    <property type="molecule type" value="Genomic_DNA"/>
</dbReference>
<dbReference type="RefSeq" id="WP_011943192.1">
    <property type="nucleotide sequence ID" value="NC_009486.1"/>
</dbReference>
<dbReference type="SMR" id="A5IK69"/>
<dbReference type="STRING" id="390874.Tpet_0571"/>
<dbReference type="KEGG" id="tpt:Tpet_0571"/>
<dbReference type="eggNOG" id="COG0757">
    <property type="taxonomic scope" value="Bacteria"/>
</dbReference>
<dbReference type="HOGENOM" id="CLU_090968_3_0_0"/>
<dbReference type="UniPathway" id="UPA00053">
    <property type="reaction ID" value="UER00086"/>
</dbReference>
<dbReference type="Proteomes" id="UP000006558">
    <property type="component" value="Chromosome"/>
</dbReference>
<dbReference type="GO" id="GO:0003855">
    <property type="term" value="F:3-dehydroquinate dehydratase activity"/>
    <property type="evidence" value="ECO:0007669"/>
    <property type="project" value="UniProtKB-UniRule"/>
</dbReference>
<dbReference type="GO" id="GO:0008652">
    <property type="term" value="P:amino acid biosynthetic process"/>
    <property type="evidence" value="ECO:0007669"/>
    <property type="project" value="UniProtKB-KW"/>
</dbReference>
<dbReference type="GO" id="GO:0009073">
    <property type="term" value="P:aromatic amino acid family biosynthetic process"/>
    <property type="evidence" value="ECO:0007669"/>
    <property type="project" value="UniProtKB-KW"/>
</dbReference>
<dbReference type="GO" id="GO:0009423">
    <property type="term" value="P:chorismate biosynthetic process"/>
    <property type="evidence" value="ECO:0007669"/>
    <property type="project" value="UniProtKB-UniRule"/>
</dbReference>
<dbReference type="GO" id="GO:0019631">
    <property type="term" value="P:quinate catabolic process"/>
    <property type="evidence" value="ECO:0007669"/>
    <property type="project" value="TreeGrafter"/>
</dbReference>
<dbReference type="CDD" id="cd00466">
    <property type="entry name" value="DHQase_II"/>
    <property type="match status" value="1"/>
</dbReference>
<dbReference type="Gene3D" id="3.40.50.9100">
    <property type="entry name" value="Dehydroquinase, class II"/>
    <property type="match status" value="1"/>
</dbReference>
<dbReference type="HAMAP" id="MF_00169">
    <property type="entry name" value="AroQ"/>
    <property type="match status" value="1"/>
</dbReference>
<dbReference type="InterPro" id="IPR001874">
    <property type="entry name" value="DHquinase_II"/>
</dbReference>
<dbReference type="InterPro" id="IPR018509">
    <property type="entry name" value="DHquinase_II_CS"/>
</dbReference>
<dbReference type="InterPro" id="IPR036441">
    <property type="entry name" value="DHquinase_II_sf"/>
</dbReference>
<dbReference type="NCBIfam" id="TIGR01088">
    <property type="entry name" value="aroQ"/>
    <property type="match status" value="1"/>
</dbReference>
<dbReference type="NCBIfam" id="NF003805">
    <property type="entry name" value="PRK05395.1-2"/>
    <property type="match status" value="1"/>
</dbReference>
<dbReference type="NCBIfam" id="NF003807">
    <property type="entry name" value="PRK05395.1-4"/>
    <property type="match status" value="1"/>
</dbReference>
<dbReference type="PANTHER" id="PTHR21272">
    <property type="entry name" value="CATABOLIC 3-DEHYDROQUINASE"/>
    <property type="match status" value="1"/>
</dbReference>
<dbReference type="PANTHER" id="PTHR21272:SF3">
    <property type="entry name" value="CATABOLIC 3-DEHYDROQUINASE"/>
    <property type="match status" value="1"/>
</dbReference>
<dbReference type="Pfam" id="PF01220">
    <property type="entry name" value="DHquinase_II"/>
    <property type="match status" value="1"/>
</dbReference>
<dbReference type="PIRSF" id="PIRSF001399">
    <property type="entry name" value="DHquinase_II"/>
    <property type="match status" value="1"/>
</dbReference>
<dbReference type="SUPFAM" id="SSF52304">
    <property type="entry name" value="Type II 3-dehydroquinate dehydratase"/>
    <property type="match status" value="1"/>
</dbReference>
<dbReference type="PROSITE" id="PS01029">
    <property type="entry name" value="DEHYDROQUINASE_II"/>
    <property type="match status" value="1"/>
</dbReference>
<organism>
    <name type="scientific">Thermotoga petrophila (strain ATCC BAA-488 / DSM 13995 / JCM 10881 / RKU-1)</name>
    <dbReference type="NCBI Taxonomy" id="390874"/>
    <lineage>
        <taxon>Bacteria</taxon>
        <taxon>Thermotogati</taxon>
        <taxon>Thermotogota</taxon>
        <taxon>Thermotogae</taxon>
        <taxon>Thermotogales</taxon>
        <taxon>Thermotogaceae</taxon>
        <taxon>Thermotoga</taxon>
    </lineage>
</organism>